<feature type="chain" id="PRO_1000062876" description="Transcriptional regulator MraZ">
    <location>
        <begin position="1"/>
        <end position="143"/>
    </location>
</feature>
<feature type="domain" description="SpoVT-AbrB 1" evidence="2">
    <location>
        <begin position="5"/>
        <end position="47"/>
    </location>
</feature>
<feature type="domain" description="SpoVT-AbrB 2" evidence="2">
    <location>
        <begin position="76"/>
        <end position="119"/>
    </location>
</feature>
<gene>
    <name evidence="1" type="primary">mraZ</name>
    <name type="ordered locus">Francci3_1406</name>
</gene>
<evidence type="ECO:0000255" key="1">
    <source>
        <dbReference type="HAMAP-Rule" id="MF_01008"/>
    </source>
</evidence>
<evidence type="ECO:0000255" key="2">
    <source>
        <dbReference type="PROSITE-ProRule" id="PRU01076"/>
    </source>
</evidence>
<accession>Q2JD59</accession>
<comment type="subunit">
    <text evidence="1">Forms oligomers.</text>
</comment>
<comment type="subcellular location">
    <subcellularLocation>
        <location evidence="1">Cytoplasm</location>
        <location evidence="1">Nucleoid</location>
    </subcellularLocation>
</comment>
<comment type="similarity">
    <text evidence="1">Belongs to the MraZ family.</text>
</comment>
<proteinExistence type="inferred from homology"/>
<organism>
    <name type="scientific">Frankia casuarinae (strain DSM 45818 / CECT 9043 / HFP020203 / CcI3)</name>
    <dbReference type="NCBI Taxonomy" id="106370"/>
    <lineage>
        <taxon>Bacteria</taxon>
        <taxon>Bacillati</taxon>
        <taxon>Actinomycetota</taxon>
        <taxon>Actinomycetes</taxon>
        <taxon>Frankiales</taxon>
        <taxon>Frankiaceae</taxon>
        <taxon>Frankia</taxon>
    </lineage>
</organism>
<protein>
    <recommendedName>
        <fullName>Transcriptional regulator MraZ</fullName>
    </recommendedName>
</protein>
<sequence length="143" mass="16110">MFLGSHAPRLDDKGRLTLPAKFRDELEGGLVITKGQERCLYVFPMAEFTRISESLRTVPVTAKALRDYSRVFFSSAADDVPDRQGRITVPAPLRSYAGLMRDCVVNGANTRIEIWDAQRWQAYLESQEESFAELSEEVLPGVI</sequence>
<keyword id="KW-0963">Cytoplasm</keyword>
<keyword id="KW-0238">DNA-binding</keyword>
<keyword id="KW-1185">Reference proteome</keyword>
<keyword id="KW-0677">Repeat</keyword>
<keyword id="KW-0804">Transcription</keyword>
<keyword id="KW-0805">Transcription regulation</keyword>
<dbReference type="EMBL" id="CP000249">
    <property type="protein sequence ID" value="ABD10783.1"/>
    <property type="molecule type" value="Genomic_DNA"/>
</dbReference>
<dbReference type="RefSeq" id="WP_011435848.1">
    <property type="nucleotide sequence ID" value="NZ_MSEA01000072.1"/>
</dbReference>
<dbReference type="SMR" id="Q2JD59"/>
<dbReference type="STRING" id="106370.Francci3_1406"/>
<dbReference type="KEGG" id="fra:Francci3_1406"/>
<dbReference type="eggNOG" id="COG2001">
    <property type="taxonomic scope" value="Bacteria"/>
</dbReference>
<dbReference type="HOGENOM" id="CLU_107907_0_5_11"/>
<dbReference type="OrthoDB" id="9807753at2"/>
<dbReference type="PhylomeDB" id="Q2JD59"/>
<dbReference type="Proteomes" id="UP000001937">
    <property type="component" value="Chromosome"/>
</dbReference>
<dbReference type="GO" id="GO:0005737">
    <property type="term" value="C:cytoplasm"/>
    <property type="evidence" value="ECO:0007669"/>
    <property type="project" value="UniProtKB-UniRule"/>
</dbReference>
<dbReference type="GO" id="GO:0009295">
    <property type="term" value="C:nucleoid"/>
    <property type="evidence" value="ECO:0007669"/>
    <property type="project" value="UniProtKB-SubCell"/>
</dbReference>
<dbReference type="GO" id="GO:0003700">
    <property type="term" value="F:DNA-binding transcription factor activity"/>
    <property type="evidence" value="ECO:0007669"/>
    <property type="project" value="UniProtKB-UniRule"/>
</dbReference>
<dbReference type="GO" id="GO:0000976">
    <property type="term" value="F:transcription cis-regulatory region binding"/>
    <property type="evidence" value="ECO:0007669"/>
    <property type="project" value="TreeGrafter"/>
</dbReference>
<dbReference type="GO" id="GO:2000143">
    <property type="term" value="P:negative regulation of DNA-templated transcription initiation"/>
    <property type="evidence" value="ECO:0007669"/>
    <property type="project" value="TreeGrafter"/>
</dbReference>
<dbReference type="CDD" id="cd16321">
    <property type="entry name" value="MraZ_C"/>
    <property type="match status" value="1"/>
</dbReference>
<dbReference type="CDD" id="cd16320">
    <property type="entry name" value="MraZ_N"/>
    <property type="match status" value="1"/>
</dbReference>
<dbReference type="Gene3D" id="3.40.1550.20">
    <property type="entry name" value="Transcriptional regulator MraZ domain"/>
    <property type="match status" value="1"/>
</dbReference>
<dbReference type="HAMAP" id="MF_01008">
    <property type="entry name" value="MraZ"/>
    <property type="match status" value="1"/>
</dbReference>
<dbReference type="InterPro" id="IPR003444">
    <property type="entry name" value="MraZ"/>
</dbReference>
<dbReference type="InterPro" id="IPR035644">
    <property type="entry name" value="MraZ_C"/>
</dbReference>
<dbReference type="InterPro" id="IPR020603">
    <property type="entry name" value="MraZ_dom"/>
</dbReference>
<dbReference type="InterPro" id="IPR035642">
    <property type="entry name" value="MraZ_N"/>
</dbReference>
<dbReference type="InterPro" id="IPR038619">
    <property type="entry name" value="MraZ_sf"/>
</dbReference>
<dbReference type="InterPro" id="IPR007159">
    <property type="entry name" value="SpoVT-AbrB_dom"/>
</dbReference>
<dbReference type="InterPro" id="IPR037914">
    <property type="entry name" value="SpoVT-AbrB_sf"/>
</dbReference>
<dbReference type="NCBIfam" id="TIGR00242">
    <property type="entry name" value="division/cell wall cluster transcriptional repressor MraZ"/>
    <property type="match status" value="1"/>
</dbReference>
<dbReference type="PANTHER" id="PTHR34701">
    <property type="entry name" value="TRANSCRIPTIONAL REGULATOR MRAZ"/>
    <property type="match status" value="1"/>
</dbReference>
<dbReference type="PANTHER" id="PTHR34701:SF1">
    <property type="entry name" value="TRANSCRIPTIONAL REGULATOR MRAZ"/>
    <property type="match status" value="1"/>
</dbReference>
<dbReference type="Pfam" id="PF02381">
    <property type="entry name" value="MraZ"/>
    <property type="match status" value="2"/>
</dbReference>
<dbReference type="SUPFAM" id="SSF89447">
    <property type="entry name" value="AbrB/MazE/MraZ-like"/>
    <property type="match status" value="1"/>
</dbReference>
<dbReference type="PROSITE" id="PS51740">
    <property type="entry name" value="SPOVT_ABRB"/>
    <property type="match status" value="2"/>
</dbReference>
<reference key="1">
    <citation type="journal article" date="2007" name="Genome Res.">
        <title>Genome characteristics of facultatively symbiotic Frankia sp. strains reflect host range and host plant biogeography.</title>
        <authorList>
            <person name="Normand P."/>
            <person name="Lapierre P."/>
            <person name="Tisa L.S."/>
            <person name="Gogarten J.P."/>
            <person name="Alloisio N."/>
            <person name="Bagnarol E."/>
            <person name="Bassi C.A."/>
            <person name="Berry A.M."/>
            <person name="Bickhart D.M."/>
            <person name="Choisne N."/>
            <person name="Couloux A."/>
            <person name="Cournoyer B."/>
            <person name="Cruveiller S."/>
            <person name="Daubin V."/>
            <person name="Demange N."/>
            <person name="Francino M.P."/>
            <person name="Goltsman E."/>
            <person name="Huang Y."/>
            <person name="Kopp O.R."/>
            <person name="Labarre L."/>
            <person name="Lapidus A."/>
            <person name="Lavire C."/>
            <person name="Marechal J."/>
            <person name="Martinez M."/>
            <person name="Mastronunzio J.E."/>
            <person name="Mullin B.C."/>
            <person name="Niemann J."/>
            <person name="Pujic P."/>
            <person name="Rawnsley T."/>
            <person name="Rouy Z."/>
            <person name="Schenowitz C."/>
            <person name="Sellstedt A."/>
            <person name="Tavares F."/>
            <person name="Tomkins J.P."/>
            <person name="Vallenet D."/>
            <person name="Valverde C."/>
            <person name="Wall L.G."/>
            <person name="Wang Y."/>
            <person name="Medigue C."/>
            <person name="Benson D.R."/>
        </authorList>
    </citation>
    <scope>NUCLEOTIDE SEQUENCE [LARGE SCALE GENOMIC DNA]</scope>
    <source>
        <strain>DSM 45818 / CECT 9043 / HFP020203 / CcI3</strain>
    </source>
</reference>
<name>MRAZ_FRACC</name>